<gene>
    <name evidence="1" type="primary">rplU</name>
    <name type="ordered locus">SSPA2959</name>
</gene>
<dbReference type="EMBL" id="FM200053">
    <property type="protein sequence ID" value="CAR61208.1"/>
    <property type="molecule type" value="Genomic_DNA"/>
</dbReference>
<dbReference type="RefSeq" id="WP_000271395.1">
    <property type="nucleotide sequence ID" value="NC_011147.1"/>
</dbReference>
<dbReference type="SMR" id="B5BGL0"/>
<dbReference type="KEGG" id="sek:SSPA2959"/>
<dbReference type="HOGENOM" id="CLU_061463_3_3_6"/>
<dbReference type="Proteomes" id="UP000001869">
    <property type="component" value="Chromosome"/>
</dbReference>
<dbReference type="GO" id="GO:0005737">
    <property type="term" value="C:cytoplasm"/>
    <property type="evidence" value="ECO:0007669"/>
    <property type="project" value="UniProtKB-ARBA"/>
</dbReference>
<dbReference type="GO" id="GO:1990904">
    <property type="term" value="C:ribonucleoprotein complex"/>
    <property type="evidence" value="ECO:0007669"/>
    <property type="project" value="UniProtKB-KW"/>
</dbReference>
<dbReference type="GO" id="GO:0005840">
    <property type="term" value="C:ribosome"/>
    <property type="evidence" value="ECO:0007669"/>
    <property type="project" value="UniProtKB-KW"/>
</dbReference>
<dbReference type="GO" id="GO:0019843">
    <property type="term" value="F:rRNA binding"/>
    <property type="evidence" value="ECO:0007669"/>
    <property type="project" value="UniProtKB-UniRule"/>
</dbReference>
<dbReference type="GO" id="GO:0003735">
    <property type="term" value="F:structural constituent of ribosome"/>
    <property type="evidence" value="ECO:0007669"/>
    <property type="project" value="InterPro"/>
</dbReference>
<dbReference type="GO" id="GO:0006412">
    <property type="term" value="P:translation"/>
    <property type="evidence" value="ECO:0007669"/>
    <property type="project" value="UniProtKB-UniRule"/>
</dbReference>
<dbReference type="HAMAP" id="MF_01363">
    <property type="entry name" value="Ribosomal_bL21"/>
    <property type="match status" value="1"/>
</dbReference>
<dbReference type="InterPro" id="IPR028909">
    <property type="entry name" value="bL21-like"/>
</dbReference>
<dbReference type="InterPro" id="IPR036164">
    <property type="entry name" value="bL21-like_sf"/>
</dbReference>
<dbReference type="InterPro" id="IPR001787">
    <property type="entry name" value="Ribosomal_bL21"/>
</dbReference>
<dbReference type="InterPro" id="IPR018258">
    <property type="entry name" value="Ribosomal_bL21_CS"/>
</dbReference>
<dbReference type="NCBIfam" id="TIGR00061">
    <property type="entry name" value="L21"/>
    <property type="match status" value="1"/>
</dbReference>
<dbReference type="PANTHER" id="PTHR21349">
    <property type="entry name" value="50S RIBOSOMAL PROTEIN L21"/>
    <property type="match status" value="1"/>
</dbReference>
<dbReference type="PANTHER" id="PTHR21349:SF0">
    <property type="entry name" value="LARGE RIBOSOMAL SUBUNIT PROTEIN BL21M"/>
    <property type="match status" value="1"/>
</dbReference>
<dbReference type="Pfam" id="PF00829">
    <property type="entry name" value="Ribosomal_L21p"/>
    <property type="match status" value="1"/>
</dbReference>
<dbReference type="SUPFAM" id="SSF141091">
    <property type="entry name" value="L21p-like"/>
    <property type="match status" value="1"/>
</dbReference>
<dbReference type="PROSITE" id="PS01169">
    <property type="entry name" value="RIBOSOMAL_L21"/>
    <property type="match status" value="1"/>
</dbReference>
<accession>B5BGL0</accession>
<name>RL21_SALPK</name>
<keyword id="KW-0687">Ribonucleoprotein</keyword>
<keyword id="KW-0689">Ribosomal protein</keyword>
<keyword id="KW-0694">RNA-binding</keyword>
<keyword id="KW-0699">rRNA-binding</keyword>
<proteinExistence type="inferred from homology"/>
<reference key="1">
    <citation type="journal article" date="2009" name="BMC Genomics">
        <title>Pseudogene accumulation in the evolutionary histories of Salmonella enterica serovars Paratyphi A and Typhi.</title>
        <authorList>
            <person name="Holt K.E."/>
            <person name="Thomson N.R."/>
            <person name="Wain J."/>
            <person name="Langridge G.C."/>
            <person name="Hasan R."/>
            <person name="Bhutta Z.A."/>
            <person name="Quail M.A."/>
            <person name="Norbertczak H."/>
            <person name="Walker D."/>
            <person name="Simmonds M."/>
            <person name="White B."/>
            <person name="Bason N."/>
            <person name="Mungall K."/>
            <person name="Dougan G."/>
            <person name="Parkhill J."/>
        </authorList>
    </citation>
    <scope>NUCLEOTIDE SEQUENCE [LARGE SCALE GENOMIC DNA]</scope>
    <source>
        <strain>AKU_12601</strain>
    </source>
</reference>
<evidence type="ECO:0000255" key="1">
    <source>
        <dbReference type="HAMAP-Rule" id="MF_01363"/>
    </source>
</evidence>
<evidence type="ECO:0000305" key="2"/>
<protein>
    <recommendedName>
        <fullName evidence="1">Large ribosomal subunit protein bL21</fullName>
    </recommendedName>
    <alternativeName>
        <fullName evidence="2">50S ribosomal protein L21</fullName>
    </alternativeName>
</protein>
<sequence length="103" mass="11592">MYAVFQSGGKQHRVSEGQTVRLEKLDIATGETIEFAEVLMIANGEEVKIGIPFVDGGVIKAEVVAHGRGEKVKIVKFRRRKHYRKQQGHRQWFTDVKITGISA</sequence>
<feature type="chain" id="PRO_1000143848" description="Large ribosomal subunit protein bL21">
    <location>
        <begin position="1"/>
        <end position="103"/>
    </location>
</feature>
<comment type="function">
    <text evidence="1">This protein binds to 23S rRNA in the presence of protein L20.</text>
</comment>
<comment type="subunit">
    <text evidence="1">Part of the 50S ribosomal subunit. Contacts protein L20.</text>
</comment>
<comment type="similarity">
    <text evidence="1">Belongs to the bacterial ribosomal protein bL21 family.</text>
</comment>
<organism>
    <name type="scientific">Salmonella paratyphi A (strain AKU_12601)</name>
    <dbReference type="NCBI Taxonomy" id="554290"/>
    <lineage>
        <taxon>Bacteria</taxon>
        <taxon>Pseudomonadati</taxon>
        <taxon>Pseudomonadota</taxon>
        <taxon>Gammaproteobacteria</taxon>
        <taxon>Enterobacterales</taxon>
        <taxon>Enterobacteriaceae</taxon>
        <taxon>Salmonella</taxon>
    </lineage>
</organism>